<organism>
    <name type="scientific">Pasteurella multocida (strain Pm70)</name>
    <dbReference type="NCBI Taxonomy" id="272843"/>
    <lineage>
        <taxon>Bacteria</taxon>
        <taxon>Pseudomonadati</taxon>
        <taxon>Pseudomonadota</taxon>
        <taxon>Gammaproteobacteria</taxon>
        <taxon>Pasteurellales</taxon>
        <taxon>Pasteurellaceae</taxon>
        <taxon>Pasteurella</taxon>
    </lineage>
</organism>
<feature type="chain" id="PRO_0000188557" description="Glycogen phosphorylase">
    <location>
        <begin position="1"/>
        <end position="818"/>
    </location>
</feature>
<feature type="modified residue" description="N6-(pyridoxal phosphate)lysine" evidence="1">
    <location>
        <position position="667"/>
    </location>
</feature>
<accession>Q9CN90</accession>
<keyword id="KW-0021">Allosteric enzyme</keyword>
<keyword id="KW-0119">Carbohydrate metabolism</keyword>
<keyword id="KW-0321">Glycogen metabolism</keyword>
<keyword id="KW-0328">Glycosyltransferase</keyword>
<keyword id="KW-0663">Pyridoxal phosphate</keyword>
<keyword id="KW-1185">Reference proteome</keyword>
<keyword id="KW-0808">Transferase</keyword>
<proteinExistence type="inferred from homology"/>
<evidence type="ECO:0000250" key="1"/>
<evidence type="ECO:0000305" key="2"/>
<reference key="1">
    <citation type="journal article" date="2001" name="Proc. Natl. Acad. Sci. U.S.A.">
        <title>Complete genomic sequence of Pasteurella multocida Pm70.</title>
        <authorList>
            <person name="May B.J."/>
            <person name="Zhang Q."/>
            <person name="Li L.L."/>
            <person name="Paustian M.L."/>
            <person name="Whittam T.S."/>
            <person name="Kapur V."/>
        </authorList>
    </citation>
    <scope>NUCLEOTIDE SEQUENCE [LARGE SCALE GENOMIC DNA]</scope>
    <source>
        <strain>Pm70</strain>
    </source>
</reference>
<name>PHSG_PASMU</name>
<gene>
    <name type="primary">glgP</name>
    <name type="ordered locus">PM0545</name>
</gene>
<protein>
    <recommendedName>
        <fullName>Glycogen phosphorylase</fullName>
        <ecNumber>2.4.1.1</ecNumber>
    </recommendedName>
</protein>
<sequence>MIMDNFDSPFLYNRPEITVDSLKKSIVYKLIFSIGRSPKEASQRDWLNATLYAVRDFVTEGWITTARQSRSEETRRVYYLSMEFLIGRTLSNAMLAEGVYDVAKQALSELNVNLEDVLEKEVDPGLGNGGLGRLAACFMDSIATLALPGVGYGIRYEYGMFKQEIEDGHQVEKPDAWLDKGAAWEFIRPSKRHTVRFGGGIHFEGKKCIWTSKEEVEALAYDQMIPGYANDSAATLRLWSAYAGDRFDLADFNKGDYFAAVQDRTLSKNISRVLYPDDSTWSGRELRLRQEYFLVSASLQDIIYRHKRIHNTMENFADKVAIHLNDTHPALAIPELMVILIDQEGYEWKKAWDITRRVFSYTCHTLMSEALETWPVEMMAHILPRHLQMIFEINDYFLEYVRTYVSTDAEFIRRVSLIEEGDHRKVRMGWLSVVGSNKVNGVAAIHSELMVTSTFADFARIYPERFTNVTNGITPRRWIGVANPELSALFDRYIGKEWRRDLSQLTLLKDKVQDPELKKSIAQIKYNNKVKLANYIKNELGVEVDPNALFDVQVKRIHEYKRQILNVLHIIARYNAMLENPEKDWVPRVFILAGKAASAYYAAKQTINLINDVANIINHDERLQGRLKVVFIPNYSVSLAELIIPAADISEQISLAGTEASGTSNMKFALNGALTIGTLDGANVEILDNVGQDHIFIFGNTVEQVESLRRHGYRPFDYYQNDEELRKVVDQIISGRFSPTDANRYHQLLQSLQYHDYYQAFADFRSYVDMQQNVDAKYQDQNAWIDSTLQNIVNMSYFSSDRTILEYAEKIWKIKPVK</sequence>
<comment type="function">
    <text evidence="1">Phosphorylase is an important allosteric enzyme in carbohydrate metabolism. Enzymes from different sources differ in their regulatory mechanisms and in their natural substrates. However, all known phosphorylases share catalytic and structural properties (By similarity).</text>
</comment>
<comment type="catalytic activity">
    <reaction>
        <text>[(1-&gt;4)-alpha-D-glucosyl](n) + phosphate = [(1-&gt;4)-alpha-D-glucosyl](n-1) + alpha-D-glucose 1-phosphate</text>
        <dbReference type="Rhea" id="RHEA:41732"/>
        <dbReference type="Rhea" id="RHEA-COMP:9584"/>
        <dbReference type="Rhea" id="RHEA-COMP:9586"/>
        <dbReference type="ChEBI" id="CHEBI:15444"/>
        <dbReference type="ChEBI" id="CHEBI:43474"/>
        <dbReference type="ChEBI" id="CHEBI:58601"/>
        <dbReference type="EC" id="2.4.1.1"/>
    </reaction>
</comment>
<comment type="cofactor">
    <cofactor evidence="1">
        <name>pyridoxal 5'-phosphate</name>
        <dbReference type="ChEBI" id="CHEBI:597326"/>
    </cofactor>
</comment>
<comment type="similarity">
    <text evidence="2">Belongs to the glycogen phosphorylase family.</text>
</comment>
<dbReference type="EC" id="2.4.1.1"/>
<dbReference type="EMBL" id="AE004439">
    <property type="protein sequence ID" value="AAK02629.1"/>
    <property type="molecule type" value="Genomic_DNA"/>
</dbReference>
<dbReference type="RefSeq" id="WP_010906718.1">
    <property type="nucleotide sequence ID" value="NC_002663.1"/>
</dbReference>
<dbReference type="SMR" id="Q9CN90"/>
<dbReference type="STRING" id="272843.PM0545"/>
<dbReference type="CAZy" id="GT35">
    <property type="family name" value="Glycosyltransferase Family 35"/>
</dbReference>
<dbReference type="EnsemblBacteria" id="AAK02629">
    <property type="protein sequence ID" value="AAK02629"/>
    <property type="gene ID" value="PM0545"/>
</dbReference>
<dbReference type="KEGG" id="pmu:PM0545"/>
<dbReference type="PATRIC" id="fig|272843.6.peg.552"/>
<dbReference type="HOGENOM" id="CLU_010198_1_1_6"/>
<dbReference type="OrthoDB" id="7229284at2"/>
<dbReference type="Proteomes" id="UP000000809">
    <property type="component" value="Chromosome"/>
</dbReference>
<dbReference type="GO" id="GO:0005737">
    <property type="term" value="C:cytoplasm"/>
    <property type="evidence" value="ECO:0007669"/>
    <property type="project" value="TreeGrafter"/>
</dbReference>
<dbReference type="GO" id="GO:0008184">
    <property type="term" value="F:glycogen phosphorylase activity"/>
    <property type="evidence" value="ECO:0007669"/>
    <property type="project" value="InterPro"/>
</dbReference>
<dbReference type="GO" id="GO:0030170">
    <property type="term" value="F:pyridoxal phosphate binding"/>
    <property type="evidence" value="ECO:0007669"/>
    <property type="project" value="InterPro"/>
</dbReference>
<dbReference type="GO" id="GO:0005980">
    <property type="term" value="P:glycogen catabolic process"/>
    <property type="evidence" value="ECO:0007669"/>
    <property type="project" value="TreeGrafter"/>
</dbReference>
<dbReference type="CDD" id="cd04300">
    <property type="entry name" value="GT35_Glycogen_Phosphorylase"/>
    <property type="match status" value="1"/>
</dbReference>
<dbReference type="FunFam" id="3.40.50.2000:FF:000003">
    <property type="entry name" value="Alpha-1,4 glucan phosphorylase"/>
    <property type="match status" value="1"/>
</dbReference>
<dbReference type="FunFam" id="3.40.50.2000:FF:000034">
    <property type="entry name" value="Alpha-1,4 glucan phosphorylase"/>
    <property type="match status" value="1"/>
</dbReference>
<dbReference type="Gene3D" id="3.40.50.2000">
    <property type="entry name" value="Glycogen Phosphorylase B"/>
    <property type="match status" value="2"/>
</dbReference>
<dbReference type="InterPro" id="IPR011833">
    <property type="entry name" value="Glycg_phsphrylas"/>
</dbReference>
<dbReference type="InterPro" id="IPR000811">
    <property type="entry name" value="Glyco_trans_35"/>
</dbReference>
<dbReference type="InterPro" id="IPR035090">
    <property type="entry name" value="Pyridoxal_P_attach_site"/>
</dbReference>
<dbReference type="NCBIfam" id="TIGR02093">
    <property type="entry name" value="P_ylase"/>
    <property type="match status" value="1"/>
</dbReference>
<dbReference type="PANTHER" id="PTHR11468">
    <property type="entry name" value="GLYCOGEN PHOSPHORYLASE"/>
    <property type="match status" value="1"/>
</dbReference>
<dbReference type="PANTHER" id="PTHR11468:SF3">
    <property type="entry name" value="GLYCOGEN PHOSPHORYLASE, LIVER FORM"/>
    <property type="match status" value="1"/>
</dbReference>
<dbReference type="Pfam" id="PF00343">
    <property type="entry name" value="Phosphorylase"/>
    <property type="match status" value="1"/>
</dbReference>
<dbReference type="PIRSF" id="PIRSF000460">
    <property type="entry name" value="Pprylas_GlgP"/>
    <property type="match status" value="1"/>
</dbReference>
<dbReference type="SUPFAM" id="SSF53756">
    <property type="entry name" value="UDP-Glycosyltransferase/glycogen phosphorylase"/>
    <property type="match status" value="1"/>
</dbReference>
<dbReference type="PROSITE" id="PS00102">
    <property type="entry name" value="PHOSPHORYLASE"/>
    <property type="match status" value="1"/>
</dbReference>